<protein>
    <recommendedName>
        <fullName evidence="1">DNA replication and repair protein RecF</fullName>
    </recommendedName>
</protein>
<feature type="chain" id="PRO_1000048570" description="DNA replication and repair protein RecF">
    <location>
        <begin position="1"/>
        <end position="360"/>
    </location>
</feature>
<feature type="binding site" evidence="1">
    <location>
        <begin position="30"/>
        <end position="37"/>
    </location>
    <ligand>
        <name>ATP</name>
        <dbReference type="ChEBI" id="CHEBI:30616"/>
    </ligand>
</feature>
<organism>
    <name type="scientific">Shewanella baltica (strain OS155 / ATCC BAA-1091)</name>
    <dbReference type="NCBI Taxonomy" id="325240"/>
    <lineage>
        <taxon>Bacteria</taxon>
        <taxon>Pseudomonadati</taxon>
        <taxon>Pseudomonadota</taxon>
        <taxon>Gammaproteobacteria</taxon>
        <taxon>Alteromonadales</taxon>
        <taxon>Shewanellaceae</taxon>
        <taxon>Shewanella</taxon>
    </lineage>
</organism>
<accession>A3CYH7</accession>
<sequence>MSLTRLNIEAFRNIQSAQLIPAPGINLIYGQNGSGKTSILEAIYFLGMGRSFRSHLSQRVINNDDDKLTLFATLNLARGDSKIGLRRFRSGETEVRIDGEKVKRLSTLAETLPIQVITPESFSLLFEGPKSRRQFIDWGAFHADPQFYGAWTNVRRVLKQRNQLLRNGSAYSNIQFWDQEFVRYAEQVTEIRNHYVDSLNELLKGIIGEFLPSVDVKVSFTRGWDSKTDFAELLENQYSRDLATGHTVSGPHKADLRLRVGTLPAQDALSRGQLKLLVCALRIAQGKLLKQQIDKHSIYLVDDLPSELDAQHRQLLLKQLTDTGAQVFVTAIDPAAIVDSLHTPPSRMFHVEQGRVTVIE</sequence>
<comment type="function">
    <text evidence="1">The RecF protein is involved in DNA metabolism; it is required for DNA replication and normal SOS inducibility. RecF binds preferentially to single-stranded, linear DNA. It also seems to bind ATP.</text>
</comment>
<comment type="subcellular location">
    <subcellularLocation>
        <location evidence="1">Cytoplasm</location>
    </subcellularLocation>
</comment>
<comment type="similarity">
    <text evidence="1">Belongs to the RecF family.</text>
</comment>
<dbReference type="EMBL" id="CP000563">
    <property type="protein sequence ID" value="ABN59540.1"/>
    <property type="molecule type" value="Genomic_DNA"/>
</dbReference>
<dbReference type="RefSeq" id="WP_011845334.1">
    <property type="nucleotide sequence ID" value="NC_009052.1"/>
</dbReference>
<dbReference type="SMR" id="A3CYH7"/>
<dbReference type="STRING" id="325240.Sbal_0003"/>
<dbReference type="GeneID" id="11774109"/>
<dbReference type="KEGG" id="sbl:Sbal_0003"/>
<dbReference type="HOGENOM" id="CLU_040267_0_0_6"/>
<dbReference type="OrthoDB" id="9803889at2"/>
<dbReference type="Proteomes" id="UP000001557">
    <property type="component" value="Chromosome"/>
</dbReference>
<dbReference type="GO" id="GO:0005737">
    <property type="term" value="C:cytoplasm"/>
    <property type="evidence" value="ECO:0007669"/>
    <property type="project" value="UniProtKB-SubCell"/>
</dbReference>
<dbReference type="GO" id="GO:0005524">
    <property type="term" value="F:ATP binding"/>
    <property type="evidence" value="ECO:0007669"/>
    <property type="project" value="UniProtKB-UniRule"/>
</dbReference>
<dbReference type="GO" id="GO:0003697">
    <property type="term" value="F:single-stranded DNA binding"/>
    <property type="evidence" value="ECO:0007669"/>
    <property type="project" value="UniProtKB-UniRule"/>
</dbReference>
<dbReference type="GO" id="GO:0006260">
    <property type="term" value="P:DNA replication"/>
    <property type="evidence" value="ECO:0007669"/>
    <property type="project" value="UniProtKB-UniRule"/>
</dbReference>
<dbReference type="GO" id="GO:0000731">
    <property type="term" value="P:DNA synthesis involved in DNA repair"/>
    <property type="evidence" value="ECO:0007669"/>
    <property type="project" value="TreeGrafter"/>
</dbReference>
<dbReference type="GO" id="GO:0006302">
    <property type="term" value="P:double-strand break repair"/>
    <property type="evidence" value="ECO:0007669"/>
    <property type="project" value="TreeGrafter"/>
</dbReference>
<dbReference type="GO" id="GO:0009432">
    <property type="term" value="P:SOS response"/>
    <property type="evidence" value="ECO:0007669"/>
    <property type="project" value="UniProtKB-UniRule"/>
</dbReference>
<dbReference type="Gene3D" id="3.40.50.300">
    <property type="entry name" value="P-loop containing nucleotide triphosphate hydrolases"/>
    <property type="match status" value="1"/>
</dbReference>
<dbReference type="Gene3D" id="1.20.1050.90">
    <property type="entry name" value="RecF/RecN/SMC, N-terminal domain"/>
    <property type="match status" value="1"/>
</dbReference>
<dbReference type="HAMAP" id="MF_00365">
    <property type="entry name" value="RecF"/>
    <property type="match status" value="1"/>
</dbReference>
<dbReference type="InterPro" id="IPR001238">
    <property type="entry name" value="DNA-binding_RecF"/>
</dbReference>
<dbReference type="InterPro" id="IPR018078">
    <property type="entry name" value="DNA-binding_RecF_CS"/>
</dbReference>
<dbReference type="InterPro" id="IPR027417">
    <property type="entry name" value="P-loop_NTPase"/>
</dbReference>
<dbReference type="InterPro" id="IPR003395">
    <property type="entry name" value="RecF/RecN/SMC_N"/>
</dbReference>
<dbReference type="InterPro" id="IPR042174">
    <property type="entry name" value="RecF_2"/>
</dbReference>
<dbReference type="NCBIfam" id="TIGR00611">
    <property type="entry name" value="recf"/>
    <property type="match status" value="1"/>
</dbReference>
<dbReference type="PANTHER" id="PTHR32182">
    <property type="entry name" value="DNA REPLICATION AND REPAIR PROTEIN RECF"/>
    <property type="match status" value="1"/>
</dbReference>
<dbReference type="PANTHER" id="PTHR32182:SF0">
    <property type="entry name" value="DNA REPLICATION AND REPAIR PROTEIN RECF"/>
    <property type="match status" value="1"/>
</dbReference>
<dbReference type="Pfam" id="PF02463">
    <property type="entry name" value="SMC_N"/>
    <property type="match status" value="1"/>
</dbReference>
<dbReference type="SUPFAM" id="SSF52540">
    <property type="entry name" value="P-loop containing nucleoside triphosphate hydrolases"/>
    <property type="match status" value="1"/>
</dbReference>
<dbReference type="PROSITE" id="PS00617">
    <property type="entry name" value="RECF_1"/>
    <property type="match status" value="1"/>
</dbReference>
<dbReference type="PROSITE" id="PS00618">
    <property type="entry name" value="RECF_2"/>
    <property type="match status" value="1"/>
</dbReference>
<keyword id="KW-0067">ATP-binding</keyword>
<keyword id="KW-0963">Cytoplasm</keyword>
<keyword id="KW-0227">DNA damage</keyword>
<keyword id="KW-0234">DNA repair</keyword>
<keyword id="KW-0235">DNA replication</keyword>
<keyword id="KW-0238">DNA-binding</keyword>
<keyword id="KW-0547">Nucleotide-binding</keyword>
<keyword id="KW-1185">Reference proteome</keyword>
<keyword id="KW-0742">SOS response</keyword>
<gene>
    <name evidence="1" type="primary">recF</name>
    <name type="ordered locus">Sbal_0003</name>
</gene>
<evidence type="ECO:0000255" key="1">
    <source>
        <dbReference type="HAMAP-Rule" id="MF_00365"/>
    </source>
</evidence>
<name>RECF_SHEB5</name>
<proteinExistence type="inferred from homology"/>
<reference key="1">
    <citation type="submission" date="2007-02" db="EMBL/GenBank/DDBJ databases">
        <title>Complete sequence of chromosome of Shewanella baltica OS155.</title>
        <authorList>
            <consortium name="US DOE Joint Genome Institute"/>
            <person name="Copeland A."/>
            <person name="Lucas S."/>
            <person name="Lapidus A."/>
            <person name="Barry K."/>
            <person name="Detter J.C."/>
            <person name="Glavina del Rio T."/>
            <person name="Hammon N."/>
            <person name="Israni S."/>
            <person name="Dalin E."/>
            <person name="Tice H."/>
            <person name="Pitluck S."/>
            <person name="Sims D.R."/>
            <person name="Brettin T."/>
            <person name="Bruce D."/>
            <person name="Han C."/>
            <person name="Tapia R."/>
            <person name="Brainard J."/>
            <person name="Schmutz J."/>
            <person name="Larimer F."/>
            <person name="Land M."/>
            <person name="Hauser L."/>
            <person name="Kyrpides N."/>
            <person name="Mikhailova N."/>
            <person name="Brettar I."/>
            <person name="Klappenbach J."/>
            <person name="Konstantinidis K."/>
            <person name="Rodrigues J."/>
            <person name="Tiedje J."/>
            <person name="Richardson P."/>
        </authorList>
    </citation>
    <scope>NUCLEOTIDE SEQUENCE [LARGE SCALE GENOMIC DNA]</scope>
    <source>
        <strain>OS155 / ATCC BAA-1091</strain>
    </source>
</reference>